<proteinExistence type="predicted"/>
<keyword id="KW-1185">Reference proteome</keyword>
<protein>
    <recommendedName>
        <fullName>SPbeta prophage-derived uncharacterized protein YorZ</fullName>
    </recommendedName>
</protein>
<gene>
    <name type="primary">yorZ</name>
    <name type="ordered locus">BSU20200</name>
</gene>
<name>YORZ_BACSU</name>
<organism>
    <name type="scientific">Bacillus subtilis (strain 168)</name>
    <dbReference type="NCBI Taxonomy" id="224308"/>
    <lineage>
        <taxon>Bacteria</taxon>
        <taxon>Bacillati</taxon>
        <taxon>Bacillota</taxon>
        <taxon>Bacilli</taxon>
        <taxon>Bacillales</taxon>
        <taxon>Bacillaceae</taxon>
        <taxon>Bacillus</taxon>
    </lineage>
</organism>
<reference key="1">
    <citation type="journal article" date="1997" name="Nature">
        <title>The complete genome sequence of the Gram-positive bacterium Bacillus subtilis.</title>
        <authorList>
            <person name="Kunst F."/>
            <person name="Ogasawara N."/>
            <person name="Moszer I."/>
            <person name="Albertini A.M."/>
            <person name="Alloni G."/>
            <person name="Azevedo V."/>
            <person name="Bertero M.G."/>
            <person name="Bessieres P."/>
            <person name="Bolotin A."/>
            <person name="Borchert S."/>
            <person name="Borriss R."/>
            <person name="Boursier L."/>
            <person name="Brans A."/>
            <person name="Braun M."/>
            <person name="Brignell S.C."/>
            <person name="Bron S."/>
            <person name="Brouillet S."/>
            <person name="Bruschi C.V."/>
            <person name="Caldwell B."/>
            <person name="Capuano V."/>
            <person name="Carter N.M."/>
            <person name="Choi S.-K."/>
            <person name="Codani J.-J."/>
            <person name="Connerton I.F."/>
            <person name="Cummings N.J."/>
            <person name="Daniel R.A."/>
            <person name="Denizot F."/>
            <person name="Devine K.M."/>
            <person name="Duesterhoeft A."/>
            <person name="Ehrlich S.D."/>
            <person name="Emmerson P.T."/>
            <person name="Entian K.-D."/>
            <person name="Errington J."/>
            <person name="Fabret C."/>
            <person name="Ferrari E."/>
            <person name="Foulger D."/>
            <person name="Fritz C."/>
            <person name="Fujita M."/>
            <person name="Fujita Y."/>
            <person name="Fuma S."/>
            <person name="Galizzi A."/>
            <person name="Galleron N."/>
            <person name="Ghim S.-Y."/>
            <person name="Glaser P."/>
            <person name="Goffeau A."/>
            <person name="Golightly E.J."/>
            <person name="Grandi G."/>
            <person name="Guiseppi G."/>
            <person name="Guy B.J."/>
            <person name="Haga K."/>
            <person name="Haiech J."/>
            <person name="Harwood C.R."/>
            <person name="Henaut A."/>
            <person name="Hilbert H."/>
            <person name="Holsappel S."/>
            <person name="Hosono S."/>
            <person name="Hullo M.-F."/>
            <person name="Itaya M."/>
            <person name="Jones L.-M."/>
            <person name="Joris B."/>
            <person name="Karamata D."/>
            <person name="Kasahara Y."/>
            <person name="Klaerr-Blanchard M."/>
            <person name="Klein C."/>
            <person name="Kobayashi Y."/>
            <person name="Koetter P."/>
            <person name="Koningstein G."/>
            <person name="Krogh S."/>
            <person name="Kumano M."/>
            <person name="Kurita K."/>
            <person name="Lapidus A."/>
            <person name="Lardinois S."/>
            <person name="Lauber J."/>
            <person name="Lazarevic V."/>
            <person name="Lee S.-M."/>
            <person name="Levine A."/>
            <person name="Liu H."/>
            <person name="Masuda S."/>
            <person name="Mauel C."/>
            <person name="Medigue C."/>
            <person name="Medina N."/>
            <person name="Mellado R.P."/>
            <person name="Mizuno M."/>
            <person name="Moestl D."/>
            <person name="Nakai S."/>
            <person name="Noback M."/>
            <person name="Noone D."/>
            <person name="O'Reilly M."/>
            <person name="Ogawa K."/>
            <person name="Ogiwara A."/>
            <person name="Oudega B."/>
            <person name="Park S.-H."/>
            <person name="Parro V."/>
            <person name="Pohl T.M."/>
            <person name="Portetelle D."/>
            <person name="Porwollik S."/>
            <person name="Prescott A.M."/>
            <person name="Presecan E."/>
            <person name="Pujic P."/>
            <person name="Purnelle B."/>
            <person name="Rapoport G."/>
            <person name="Rey M."/>
            <person name="Reynolds S."/>
            <person name="Rieger M."/>
            <person name="Rivolta C."/>
            <person name="Rocha E."/>
            <person name="Roche B."/>
            <person name="Rose M."/>
            <person name="Sadaie Y."/>
            <person name="Sato T."/>
            <person name="Scanlan E."/>
            <person name="Schleich S."/>
            <person name="Schroeter R."/>
            <person name="Scoffone F."/>
            <person name="Sekiguchi J."/>
            <person name="Sekowska A."/>
            <person name="Seror S.J."/>
            <person name="Serror P."/>
            <person name="Shin B.-S."/>
            <person name="Soldo B."/>
            <person name="Sorokin A."/>
            <person name="Tacconi E."/>
            <person name="Takagi T."/>
            <person name="Takahashi H."/>
            <person name="Takemaru K."/>
            <person name="Takeuchi M."/>
            <person name="Tamakoshi A."/>
            <person name="Tanaka T."/>
            <person name="Terpstra P."/>
            <person name="Tognoni A."/>
            <person name="Tosato V."/>
            <person name="Uchiyama S."/>
            <person name="Vandenbol M."/>
            <person name="Vannier F."/>
            <person name="Vassarotti A."/>
            <person name="Viari A."/>
            <person name="Wambutt R."/>
            <person name="Wedler E."/>
            <person name="Wedler H."/>
            <person name="Weitzenegger T."/>
            <person name="Winters P."/>
            <person name="Wipat A."/>
            <person name="Yamamoto H."/>
            <person name="Yamane K."/>
            <person name="Yasumoto K."/>
            <person name="Yata K."/>
            <person name="Yoshida K."/>
            <person name="Yoshikawa H.-F."/>
            <person name="Zumstein E."/>
            <person name="Yoshikawa H."/>
            <person name="Danchin A."/>
        </authorList>
    </citation>
    <scope>NUCLEOTIDE SEQUENCE [LARGE SCALE GENOMIC DNA]</scope>
    <source>
        <strain>168</strain>
    </source>
</reference>
<accession>O31889</accession>
<sequence>MNHICDICKEYISGKTICLRISDEKTYVDFNCCESCAKGYSDKVKNECSNLSVKKTLEHLGLNIKYKIRG</sequence>
<feature type="chain" id="PRO_0000372599" description="SPbeta prophage-derived uncharacterized protein YorZ">
    <location>
        <begin position="1"/>
        <end position="70"/>
    </location>
</feature>
<dbReference type="EMBL" id="AL009126">
    <property type="protein sequence ID" value="CAB13912.1"/>
    <property type="molecule type" value="Genomic_DNA"/>
</dbReference>
<dbReference type="RefSeq" id="NP_389902.1">
    <property type="nucleotide sequence ID" value="NC_000964.3"/>
</dbReference>
<dbReference type="RefSeq" id="WP_009969822.1">
    <property type="nucleotide sequence ID" value="NZ_OZ025638.1"/>
</dbReference>
<dbReference type="SMR" id="O31889"/>
<dbReference type="FunCoup" id="O31889">
    <property type="interactions" value="109"/>
</dbReference>
<dbReference type="STRING" id="224308.BSU20200"/>
<dbReference type="PaxDb" id="224308-BSU20200"/>
<dbReference type="EnsemblBacteria" id="CAB13912">
    <property type="protein sequence ID" value="CAB13912"/>
    <property type="gene ID" value="BSU_20200"/>
</dbReference>
<dbReference type="GeneID" id="939577"/>
<dbReference type="KEGG" id="bsu:BSU20200"/>
<dbReference type="PATRIC" id="fig|224308.179.peg.2210"/>
<dbReference type="InParanoid" id="O31889"/>
<dbReference type="OrthoDB" id="2890100at2"/>
<dbReference type="BioCyc" id="BSUB:BSU20200-MONOMER"/>
<dbReference type="Proteomes" id="UP000001570">
    <property type="component" value="Chromosome"/>
</dbReference>